<evidence type="ECO:0000255" key="1">
    <source>
        <dbReference type="HAMAP-Rule" id="MF_01307"/>
    </source>
</evidence>
<evidence type="ECO:0000256" key="2">
    <source>
        <dbReference type="SAM" id="MobiDB-lite"/>
    </source>
</evidence>
<evidence type="ECO:0000305" key="3"/>
<name>RS5_ARTS2</name>
<comment type="function">
    <text evidence="1">With S4 and S12 plays an important role in translational accuracy.</text>
</comment>
<comment type="function">
    <text evidence="1">Located at the back of the 30S subunit body where it stabilizes the conformation of the head with respect to the body.</text>
</comment>
<comment type="subunit">
    <text evidence="1">Part of the 30S ribosomal subunit. Contacts proteins S4 and S8.</text>
</comment>
<comment type="domain">
    <text>The N-terminal domain interacts with the head of the 30S subunit; the C-terminal domain interacts with the body and contacts protein S4. The interaction surface between S4 and S5 is involved in control of translational fidelity.</text>
</comment>
<comment type="similarity">
    <text evidence="1">Belongs to the universal ribosomal protein uS5 family.</text>
</comment>
<organism>
    <name type="scientific">Arthrobacter sp. (strain FB24)</name>
    <dbReference type="NCBI Taxonomy" id="290399"/>
    <lineage>
        <taxon>Bacteria</taxon>
        <taxon>Bacillati</taxon>
        <taxon>Actinomycetota</taxon>
        <taxon>Actinomycetes</taxon>
        <taxon>Micrococcales</taxon>
        <taxon>Micrococcaceae</taxon>
        <taxon>Arthrobacter</taxon>
    </lineage>
</organism>
<feature type="chain" id="PRO_0000323066" description="Small ribosomal subunit protein uS5">
    <location>
        <begin position="1"/>
        <end position="236"/>
    </location>
</feature>
<feature type="domain" description="S5 DRBM" evidence="1">
    <location>
        <begin position="67"/>
        <end position="130"/>
    </location>
</feature>
<feature type="region of interest" description="Disordered" evidence="2">
    <location>
        <begin position="1"/>
        <end position="64"/>
    </location>
</feature>
<feature type="compositionally biased region" description="Basic and acidic residues" evidence="2">
    <location>
        <begin position="1"/>
        <end position="10"/>
    </location>
</feature>
<feature type="compositionally biased region" description="Low complexity" evidence="2">
    <location>
        <begin position="11"/>
        <end position="27"/>
    </location>
</feature>
<feature type="compositionally biased region" description="Basic and acidic residues" evidence="2">
    <location>
        <begin position="28"/>
        <end position="64"/>
    </location>
</feature>
<proteinExistence type="inferred from homology"/>
<dbReference type="EMBL" id="CP000454">
    <property type="protein sequence ID" value="ABK04338.1"/>
    <property type="molecule type" value="Genomic_DNA"/>
</dbReference>
<dbReference type="SMR" id="A0JZ68"/>
<dbReference type="STRING" id="290399.Arth_2959"/>
<dbReference type="KEGG" id="art:Arth_2959"/>
<dbReference type="eggNOG" id="COG0098">
    <property type="taxonomic scope" value="Bacteria"/>
</dbReference>
<dbReference type="HOGENOM" id="CLU_065898_1_0_11"/>
<dbReference type="OrthoDB" id="9809045at2"/>
<dbReference type="Proteomes" id="UP000000754">
    <property type="component" value="Chromosome"/>
</dbReference>
<dbReference type="GO" id="GO:0015935">
    <property type="term" value="C:small ribosomal subunit"/>
    <property type="evidence" value="ECO:0007669"/>
    <property type="project" value="InterPro"/>
</dbReference>
<dbReference type="GO" id="GO:0019843">
    <property type="term" value="F:rRNA binding"/>
    <property type="evidence" value="ECO:0007669"/>
    <property type="project" value="UniProtKB-UniRule"/>
</dbReference>
<dbReference type="GO" id="GO:0003735">
    <property type="term" value="F:structural constituent of ribosome"/>
    <property type="evidence" value="ECO:0007669"/>
    <property type="project" value="InterPro"/>
</dbReference>
<dbReference type="GO" id="GO:0006412">
    <property type="term" value="P:translation"/>
    <property type="evidence" value="ECO:0007669"/>
    <property type="project" value="UniProtKB-UniRule"/>
</dbReference>
<dbReference type="FunFam" id="3.30.160.20:FF:000001">
    <property type="entry name" value="30S ribosomal protein S5"/>
    <property type="match status" value="1"/>
</dbReference>
<dbReference type="FunFam" id="3.30.230.10:FF:000002">
    <property type="entry name" value="30S ribosomal protein S5"/>
    <property type="match status" value="1"/>
</dbReference>
<dbReference type="Gene3D" id="3.30.160.20">
    <property type="match status" value="1"/>
</dbReference>
<dbReference type="Gene3D" id="3.30.230.10">
    <property type="match status" value="1"/>
</dbReference>
<dbReference type="HAMAP" id="MF_01307_B">
    <property type="entry name" value="Ribosomal_uS5_B"/>
    <property type="match status" value="1"/>
</dbReference>
<dbReference type="InterPro" id="IPR020568">
    <property type="entry name" value="Ribosomal_Su5_D2-typ_SF"/>
</dbReference>
<dbReference type="InterPro" id="IPR000851">
    <property type="entry name" value="Ribosomal_uS5"/>
</dbReference>
<dbReference type="InterPro" id="IPR005712">
    <property type="entry name" value="Ribosomal_uS5_bac-type"/>
</dbReference>
<dbReference type="InterPro" id="IPR005324">
    <property type="entry name" value="Ribosomal_uS5_C"/>
</dbReference>
<dbReference type="InterPro" id="IPR013810">
    <property type="entry name" value="Ribosomal_uS5_N"/>
</dbReference>
<dbReference type="InterPro" id="IPR018192">
    <property type="entry name" value="Ribosomal_uS5_N_CS"/>
</dbReference>
<dbReference type="InterPro" id="IPR014721">
    <property type="entry name" value="Ribsml_uS5_D2-typ_fold_subgr"/>
</dbReference>
<dbReference type="NCBIfam" id="TIGR01021">
    <property type="entry name" value="rpsE_bact"/>
    <property type="match status" value="1"/>
</dbReference>
<dbReference type="PANTHER" id="PTHR48277">
    <property type="entry name" value="MITOCHONDRIAL RIBOSOMAL PROTEIN S5"/>
    <property type="match status" value="1"/>
</dbReference>
<dbReference type="PANTHER" id="PTHR48277:SF1">
    <property type="entry name" value="MITOCHONDRIAL RIBOSOMAL PROTEIN S5"/>
    <property type="match status" value="1"/>
</dbReference>
<dbReference type="Pfam" id="PF00333">
    <property type="entry name" value="Ribosomal_S5"/>
    <property type="match status" value="1"/>
</dbReference>
<dbReference type="Pfam" id="PF03719">
    <property type="entry name" value="Ribosomal_S5_C"/>
    <property type="match status" value="1"/>
</dbReference>
<dbReference type="SUPFAM" id="SSF54768">
    <property type="entry name" value="dsRNA-binding domain-like"/>
    <property type="match status" value="1"/>
</dbReference>
<dbReference type="SUPFAM" id="SSF54211">
    <property type="entry name" value="Ribosomal protein S5 domain 2-like"/>
    <property type="match status" value="1"/>
</dbReference>
<dbReference type="PROSITE" id="PS00585">
    <property type="entry name" value="RIBOSOMAL_S5"/>
    <property type="match status" value="1"/>
</dbReference>
<dbReference type="PROSITE" id="PS50881">
    <property type="entry name" value="S5_DSRBD"/>
    <property type="match status" value="1"/>
</dbReference>
<accession>A0JZ68</accession>
<reference key="1">
    <citation type="journal article" date="2013" name="Stand. Genomic Sci.">
        <title>Complete genome sequence of Arthrobacter sp. strain FB24.</title>
        <authorList>
            <person name="Nakatsu C.H."/>
            <person name="Barabote R."/>
            <person name="Thompson S."/>
            <person name="Bruce D."/>
            <person name="Detter C."/>
            <person name="Brettin T."/>
            <person name="Han C."/>
            <person name="Beasley F."/>
            <person name="Chen W."/>
            <person name="Konopka A."/>
            <person name="Xie G."/>
        </authorList>
    </citation>
    <scope>NUCLEOTIDE SEQUENCE [LARGE SCALE GENOMIC DNA]</scope>
    <source>
        <strain>FB24</strain>
    </source>
</reference>
<protein>
    <recommendedName>
        <fullName evidence="1">Small ribosomal subunit protein uS5</fullName>
    </recommendedName>
    <alternativeName>
        <fullName evidence="3">30S ribosomal protein S5</fullName>
    </alternativeName>
</protein>
<sequence>MTENNEKDIQVTEAVAAPATETAAPATTDDRRGGARRGERGDRGQGRGDRGGRGGRDGGREAEKSQFVERVVTINRVSKVVKGGRRFSFTALVVVGDGNGMVGVGYGKAKEVPAAIAKGVEEAKKSFFRVPRIGSTIPHRVQGEAAAGVVMLRPASAGTGVIAGGPVRAVLECVGIHDILSKSLGSSNAINIVHATVDALKRLEEPAAVAARRGLPLDEIAPAAMVKALMNQKAGV</sequence>
<gene>
    <name evidence="1" type="primary">rpsE</name>
    <name type="ordered locus">Arth_2959</name>
</gene>
<keyword id="KW-1185">Reference proteome</keyword>
<keyword id="KW-0687">Ribonucleoprotein</keyword>
<keyword id="KW-0689">Ribosomal protein</keyword>
<keyword id="KW-0694">RNA-binding</keyword>
<keyword id="KW-0699">rRNA-binding</keyword>